<protein>
    <recommendedName>
        <fullName evidence="1">Small ribosomal subunit protein uS7</fullName>
    </recommendedName>
    <alternativeName>
        <fullName evidence="2">30S ribosomal protein S7</fullName>
    </alternativeName>
</protein>
<dbReference type="EMBL" id="CP000738">
    <property type="protein sequence ID" value="ABR59835.1"/>
    <property type="molecule type" value="Genomic_DNA"/>
</dbReference>
<dbReference type="RefSeq" id="WP_011975169.1">
    <property type="nucleotide sequence ID" value="NC_009636.1"/>
</dbReference>
<dbReference type="RefSeq" id="YP_001326670.1">
    <property type="nucleotide sequence ID" value="NC_009636.1"/>
</dbReference>
<dbReference type="SMR" id="A6U855"/>
<dbReference type="STRING" id="366394.Smed_0982"/>
<dbReference type="GeneID" id="61614974"/>
<dbReference type="KEGG" id="smd:Smed_0982"/>
<dbReference type="PATRIC" id="fig|366394.8.peg.4103"/>
<dbReference type="eggNOG" id="COG0049">
    <property type="taxonomic scope" value="Bacteria"/>
</dbReference>
<dbReference type="HOGENOM" id="CLU_072226_1_1_5"/>
<dbReference type="OrthoDB" id="9807653at2"/>
<dbReference type="Proteomes" id="UP000001108">
    <property type="component" value="Chromosome"/>
</dbReference>
<dbReference type="GO" id="GO:0015935">
    <property type="term" value="C:small ribosomal subunit"/>
    <property type="evidence" value="ECO:0007669"/>
    <property type="project" value="InterPro"/>
</dbReference>
<dbReference type="GO" id="GO:0019843">
    <property type="term" value="F:rRNA binding"/>
    <property type="evidence" value="ECO:0007669"/>
    <property type="project" value="UniProtKB-UniRule"/>
</dbReference>
<dbReference type="GO" id="GO:0003735">
    <property type="term" value="F:structural constituent of ribosome"/>
    <property type="evidence" value="ECO:0007669"/>
    <property type="project" value="InterPro"/>
</dbReference>
<dbReference type="GO" id="GO:0000049">
    <property type="term" value="F:tRNA binding"/>
    <property type="evidence" value="ECO:0007669"/>
    <property type="project" value="UniProtKB-UniRule"/>
</dbReference>
<dbReference type="GO" id="GO:0006412">
    <property type="term" value="P:translation"/>
    <property type="evidence" value="ECO:0007669"/>
    <property type="project" value="UniProtKB-UniRule"/>
</dbReference>
<dbReference type="CDD" id="cd14869">
    <property type="entry name" value="uS7_Bacteria"/>
    <property type="match status" value="1"/>
</dbReference>
<dbReference type="FunFam" id="1.10.455.10:FF:000001">
    <property type="entry name" value="30S ribosomal protein S7"/>
    <property type="match status" value="1"/>
</dbReference>
<dbReference type="Gene3D" id="1.10.455.10">
    <property type="entry name" value="Ribosomal protein S7 domain"/>
    <property type="match status" value="1"/>
</dbReference>
<dbReference type="HAMAP" id="MF_00480_B">
    <property type="entry name" value="Ribosomal_uS7_B"/>
    <property type="match status" value="1"/>
</dbReference>
<dbReference type="InterPro" id="IPR000235">
    <property type="entry name" value="Ribosomal_uS7"/>
</dbReference>
<dbReference type="InterPro" id="IPR005717">
    <property type="entry name" value="Ribosomal_uS7_bac/org-type"/>
</dbReference>
<dbReference type="InterPro" id="IPR020606">
    <property type="entry name" value="Ribosomal_uS7_CS"/>
</dbReference>
<dbReference type="InterPro" id="IPR023798">
    <property type="entry name" value="Ribosomal_uS7_dom"/>
</dbReference>
<dbReference type="InterPro" id="IPR036823">
    <property type="entry name" value="Ribosomal_uS7_dom_sf"/>
</dbReference>
<dbReference type="NCBIfam" id="TIGR01029">
    <property type="entry name" value="rpsG_bact"/>
    <property type="match status" value="1"/>
</dbReference>
<dbReference type="PANTHER" id="PTHR11205">
    <property type="entry name" value="RIBOSOMAL PROTEIN S7"/>
    <property type="match status" value="1"/>
</dbReference>
<dbReference type="Pfam" id="PF00177">
    <property type="entry name" value="Ribosomal_S7"/>
    <property type="match status" value="1"/>
</dbReference>
<dbReference type="PIRSF" id="PIRSF002122">
    <property type="entry name" value="RPS7p_RPS7a_RPS5e_RPS7o"/>
    <property type="match status" value="1"/>
</dbReference>
<dbReference type="SUPFAM" id="SSF47973">
    <property type="entry name" value="Ribosomal protein S7"/>
    <property type="match status" value="1"/>
</dbReference>
<dbReference type="PROSITE" id="PS00052">
    <property type="entry name" value="RIBOSOMAL_S7"/>
    <property type="match status" value="1"/>
</dbReference>
<name>RS7_SINMW</name>
<proteinExistence type="inferred from homology"/>
<organism>
    <name type="scientific">Sinorhizobium medicae (strain WSM419)</name>
    <name type="common">Ensifer medicae</name>
    <dbReference type="NCBI Taxonomy" id="366394"/>
    <lineage>
        <taxon>Bacteria</taxon>
        <taxon>Pseudomonadati</taxon>
        <taxon>Pseudomonadota</taxon>
        <taxon>Alphaproteobacteria</taxon>
        <taxon>Hyphomicrobiales</taxon>
        <taxon>Rhizobiaceae</taxon>
        <taxon>Sinorhizobium/Ensifer group</taxon>
        <taxon>Sinorhizobium</taxon>
    </lineage>
</organism>
<evidence type="ECO:0000255" key="1">
    <source>
        <dbReference type="HAMAP-Rule" id="MF_00480"/>
    </source>
</evidence>
<evidence type="ECO:0000305" key="2"/>
<feature type="chain" id="PRO_1000014293" description="Small ribosomal subunit protein uS7">
    <location>
        <begin position="1"/>
        <end position="156"/>
    </location>
</feature>
<sequence>MSRRHRAEKREINPDPKFGDLVVTKFMNAIMLHGKKSVAESIVYGAFDAVQSKLKQEPVTVFHSALDNIAPHVEVRSRRVGGATYQVPVDVRPERRQALAIRWLIAAARKRNETTMVDRLCGELMDAANNRGSAVKKREDTHKMADANRAFSHYRW</sequence>
<gene>
    <name evidence="1" type="primary">rpsG</name>
    <name type="ordered locus">Smed_0982</name>
</gene>
<reference key="1">
    <citation type="submission" date="2007-06" db="EMBL/GenBank/DDBJ databases">
        <title>Complete sequence of Sinorhizobium medicae WSM419 chromosome.</title>
        <authorList>
            <consortium name="US DOE Joint Genome Institute"/>
            <person name="Copeland A."/>
            <person name="Lucas S."/>
            <person name="Lapidus A."/>
            <person name="Barry K."/>
            <person name="Glavina del Rio T."/>
            <person name="Dalin E."/>
            <person name="Tice H."/>
            <person name="Pitluck S."/>
            <person name="Chain P."/>
            <person name="Malfatti S."/>
            <person name="Shin M."/>
            <person name="Vergez L."/>
            <person name="Schmutz J."/>
            <person name="Larimer F."/>
            <person name="Land M."/>
            <person name="Hauser L."/>
            <person name="Kyrpides N."/>
            <person name="Mikhailova N."/>
            <person name="Reeve W.G."/>
            <person name="Richardson P."/>
        </authorList>
    </citation>
    <scope>NUCLEOTIDE SEQUENCE [LARGE SCALE GENOMIC DNA]</scope>
    <source>
        <strain>WSM419</strain>
    </source>
</reference>
<keyword id="KW-0687">Ribonucleoprotein</keyword>
<keyword id="KW-0689">Ribosomal protein</keyword>
<keyword id="KW-0694">RNA-binding</keyword>
<keyword id="KW-0699">rRNA-binding</keyword>
<keyword id="KW-0820">tRNA-binding</keyword>
<comment type="function">
    <text evidence="1">One of the primary rRNA binding proteins, it binds directly to 16S rRNA where it nucleates assembly of the head domain of the 30S subunit. Is located at the subunit interface close to the decoding center, probably blocks exit of the E-site tRNA.</text>
</comment>
<comment type="subunit">
    <text evidence="1">Part of the 30S ribosomal subunit. Contacts proteins S9 and S11.</text>
</comment>
<comment type="similarity">
    <text evidence="1">Belongs to the universal ribosomal protein uS7 family.</text>
</comment>
<accession>A6U855</accession>